<comment type="function">
    <text evidence="2">Produces ATP from ADP in the presence of a proton gradient across the membrane. The catalytic sites are hosted primarily by the beta subunits.</text>
</comment>
<comment type="catalytic activity">
    <reaction evidence="2">
        <text>ATP + H2O + 4 H(+)(in) = ADP + phosphate + 5 H(+)(out)</text>
        <dbReference type="Rhea" id="RHEA:57720"/>
        <dbReference type="ChEBI" id="CHEBI:15377"/>
        <dbReference type="ChEBI" id="CHEBI:15378"/>
        <dbReference type="ChEBI" id="CHEBI:30616"/>
        <dbReference type="ChEBI" id="CHEBI:43474"/>
        <dbReference type="ChEBI" id="CHEBI:456216"/>
        <dbReference type="EC" id="7.1.2.2"/>
    </reaction>
</comment>
<comment type="subunit">
    <text evidence="2">F-type ATPases have 2 components, CF(1) - the catalytic core - and CF(0) - the membrane proton channel. CF(1) has five subunits: alpha(3), beta(3), gamma(1), delta(1), epsilon(1). CF(0) has four main subunits: a(1), b(1), b'(1) and c(9-12).</text>
</comment>
<comment type="subcellular location">
    <subcellularLocation>
        <location evidence="2">Plastid</location>
        <location evidence="2">Chloroplast thylakoid membrane</location>
        <topology evidence="2">Peripheral membrane protein</topology>
    </subcellularLocation>
</comment>
<comment type="similarity">
    <text evidence="2">Belongs to the ATPase alpha/beta chains family.</text>
</comment>
<gene>
    <name evidence="2" type="primary">atpB</name>
</gene>
<protein>
    <recommendedName>
        <fullName evidence="2">ATP synthase subunit beta, chloroplastic</fullName>
        <ecNumber evidence="2">7.1.2.2</ecNumber>
    </recommendedName>
    <alternativeName>
        <fullName evidence="2">ATP synthase F1 sector subunit beta</fullName>
    </alternativeName>
    <alternativeName>
        <fullName evidence="2">F-ATPase subunit beta</fullName>
    </alternativeName>
</protein>
<proteinExistence type="inferred from homology"/>
<organism>
    <name type="scientific">Arabis hirsuta</name>
    <name type="common">Hairy rock-cress</name>
    <name type="synonym">Turritis hirsuta</name>
    <dbReference type="NCBI Taxonomy" id="78191"/>
    <lineage>
        <taxon>Eukaryota</taxon>
        <taxon>Viridiplantae</taxon>
        <taxon>Streptophyta</taxon>
        <taxon>Embryophyta</taxon>
        <taxon>Tracheophyta</taxon>
        <taxon>Spermatophyta</taxon>
        <taxon>Magnoliopsida</taxon>
        <taxon>eudicotyledons</taxon>
        <taxon>Gunneridae</taxon>
        <taxon>Pentapetalae</taxon>
        <taxon>rosids</taxon>
        <taxon>malvids</taxon>
        <taxon>Brassicales</taxon>
        <taxon>Brassicaceae</taxon>
        <taxon>Arabideae</taxon>
        <taxon>Arabis</taxon>
    </lineage>
</organism>
<dbReference type="EC" id="7.1.2.2" evidence="2"/>
<dbReference type="EMBL" id="AP009369">
    <property type="protein sequence ID" value="BAF50030.1"/>
    <property type="molecule type" value="Genomic_DNA"/>
</dbReference>
<dbReference type="RefSeq" id="YP_001123206.1">
    <property type="nucleotide sequence ID" value="NC_009268.1"/>
</dbReference>
<dbReference type="SMR" id="A4QK25"/>
<dbReference type="GeneID" id="4962508"/>
<dbReference type="GO" id="GO:0009535">
    <property type="term" value="C:chloroplast thylakoid membrane"/>
    <property type="evidence" value="ECO:0007669"/>
    <property type="project" value="UniProtKB-SubCell"/>
</dbReference>
<dbReference type="GO" id="GO:0005739">
    <property type="term" value="C:mitochondrion"/>
    <property type="evidence" value="ECO:0007669"/>
    <property type="project" value="GOC"/>
</dbReference>
<dbReference type="GO" id="GO:0045259">
    <property type="term" value="C:proton-transporting ATP synthase complex"/>
    <property type="evidence" value="ECO:0007669"/>
    <property type="project" value="UniProtKB-KW"/>
</dbReference>
<dbReference type="GO" id="GO:0005524">
    <property type="term" value="F:ATP binding"/>
    <property type="evidence" value="ECO:0007669"/>
    <property type="project" value="UniProtKB-UniRule"/>
</dbReference>
<dbReference type="GO" id="GO:0016887">
    <property type="term" value="F:ATP hydrolysis activity"/>
    <property type="evidence" value="ECO:0007669"/>
    <property type="project" value="InterPro"/>
</dbReference>
<dbReference type="GO" id="GO:0046933">
    <property type="term" value="F:proton-transporting ATP synthase activity, rotational mechanism"/>
    <property type="evidence" value="ECO:0007669"/>
    <property type="project" value="UniProtKB-UniRule"/>
</dbReference>
<dbReference type="GO" id="GO:0042776">
    <property type="term" value="P:proton motive force-driven mitochondrial ATP synthesis"/>
    <property type="evidence" value="ECO:0007669"/>
    <property type="project" value="TreeGrafter"/>
</dbReference>
<dbReference type="CDD" id="cd18110">
    <property type="entry name" value="ATP-synt_F1_beta_C"/>
    <property type="match status" value="1"/>
</dbReference>
<dbReference type="CDD" id="cd18115">
    <property type="entry name" value="ATP-synt_F1_beta_N"/>
    <property type="match status" value="1"/>
</dbReference>
<dbReference type="CDD" id="cd01133">
    <property type="entry name" value="F1-ATPase_beta_CD"/>
    <property type="match status" value="1"/>
</dbReference>
<dbReference type="FunFam" id="1.10.1140.10:FF:000001">
    <property type="entry name" value="ATP synthase subunit beta"/>
    <property type="match status" value="1"/>
</dbReference>
<dbReference type="FunFam" id="3.40.50.300:FF:000026">
    <property type="entry name" value="ATP synthase subunit beta"/>
    <property type="match status" value="1"/>
</dbReference>
<dbReference type="FunFam" id="2.40.10.170:FF:000002">
    <property type="entry name" value="ATP synthase subunit beta, chloroplastic"/>
    <property type="match status" value="1"/>
</dbReference>
<dbReference type="Gene3D" id="2.40.10.170">
    <property type="match status" value="1"/>
</dbReference>
<dbReference type="Gene3D" id="1.10.1140.10">
    <property type="entry name" value="Bovine Mitochondrial F1-atpase, Atp Synthase Beta Chain, Chain D, domain 3"/>
    <property type="match status" value="1"/>
</dbReference>
<dbReference type="Gene3D" id="3.40.50.300">
    <property type="entry name" value="P-loop containing nucleotide triphosphate hydrolases"/>
    <property type="match status" value="1"/>
</dbReference>
<dbReference type="HAMAP" id="MF_01347">
    <property type="entry name" value="ATP_synth_beta_bact"/>
    <property type="match status" value="1"/>
</dbReference>
<dbReference type="InterPro" id="IPR003593">
    <property type="entry name" value="AAA+_ATPase"/>
</dbReference>
<dbReference type="InterPro" id="IPR055190">
    <property type="entry name" value="ATP-synt_VA_C"/>
</dbReference>
<dbReference type="InterPro" id="IPR005722">
    <property type="entry name" value="ATP_synth_F1_bsu"/>
</dbReference>
<dbReference type="InterPro" id="IPR020003">
    <property type="entry name" value="ATPase_a/bsu_AS"/>
</dbReference>
<dbReference type="InterPro" id="IPR050053">
    <property type="entry name" value="ATPase_alpha/beta_chains"/>
</dbReference>
<dbReference type="InterPro" id="IPR004100">
    <property type="entry name" value="ATPase_F1/V1/A1_a/bsu_N"/>
</dbReference>
<dbReference type="InterPro" id="IPR036121">
    <property type="entry name" value="ATPase_F1/V1/A1_a/bsu_N_sf"/>
</dbReference>
<dbReference type="InterPro" id="IPR000194">
    <property type="entry name" value="ATPase_F1/V1/A1_a/bsu_nucl-bd"/>
</dbReference>
<dbReference type="InterPro" id="IPR024034">
    <property type="entry name" value="ATPase_F1/V1_b/a_C"/>
</dbReference>
<dbReference type="InterPro" id="IPR027417">
    <property type="entry name" value="P-loop_NTPase"/>
</dbReference>
<dbReference type="NCBIfam" id="TIGR01039">
    <property type="entry name" value="atpD"/>
    <property type="match status" value="1"/>
</dbReference>
<dbReference type="PANTHER" id="PTHR15184">
    <property type="entry name" value="ATP SYNTHASE"/>
    <property type="match status" value="1"/>
</dbReference>
<dbReference type="PANTHER" id="PTHR15184:SF71">
    <property type="entry name" value="ATP SYNTHASE SUBUNIT BETA, MITOCHONDRIAL"/>
    <property type="match status" value="1"/>
</dbReference>
<dbReference type="Pfam" id="PF00006">
    <property type="entry name" value="ATP-synt_ab"/>
    <property type="match status" value="1"/>
</dbReference>
<dbReference type="Pfam" id="PF02874">
    <property type="entry name" value="ATP-synt_ab_N"/>
    <property type="match status" value="1"/>
</dbReference>
<dbReference type="Pfam" id="PF22919">
    <property type="entry name" value="ATP-synt_VA_C"/>
    <property type="match status" value="1"/>
</dbReference>
<dbReference type="SMART" id="SM00382">
    <property type="entry name" value="AAA"/>
    <property type="match status" value="1"/>
</dbReference>
<dbReference type="SUPFAM" id="SSF47917">
    <property type="entry name" value="C-terminal domain of alpha and beta subunits of F1 ATP synthase"/>
    <property type="match status" value="1"/>
</dbReference>
<dbReference type="SUPFAM" id="SSF50615">
    <property type="entry name" value="N-terminal domain of alpha and beta subunits of F1 ATP synthase"/>
    <property type="match status" value="1"/>
</dbReference>
<dbReference type="SUPFAM" id="SSF52540">
    <property type="entry name" value="P-loop containing nucleoside triphosphate hydrolases"/>
    <property type="match status" value="1"/>
</dbReference>
<dbReference type="PROSITE" id="PS00152">
    <property type="entry name" value="ATPASE_ALPHA_BETA"/>
    <property type="match status" value="1"/>
</dbReference>
<geneLocation type="chloroplast"/>
<sequence>MRINPTTSDPEVSIREKKNLGRIAQIIGPVLDVAFPPGKMPNIYNALVVKGRDTLGQEINVTCEVQQLLGNNRVRAVAMSATEGLKRGMDVVDMGNPLSVPVGGATLGRIFNVLGEPVDNLGPVDTRTTSPIHKSAPAFIELDTKLSIFETGIKVVDLLAPYRRGGKIGLFGGAGVGKTVLIMELINNIAKAHGGVSVFGGVGERTREGNDLYMEMKESGVINEQNLAESKVALVYGQMNEPPGARMRVGLTALTMAEYFRDVNEQDVLLFIDNIFRFVQAGSEVSALLGRMPSAVGYQPTLSTEMGSLQERITSTKKGSITSIQAVYVPADDLTDPAPATTFAHLDATTVLSRGLAAKGIYPAVDPLDSTSTMLQPRIVGEEHYETAQQVKQTLQRYKELQDIIAILGLDELSEEDRLTVARARKIERFLSQPFFVAEVFTGSPGKYVGLAETIRGFKLILSGEFDSLPEQAFYLVGNIDEATAKATNLEMESKLKK</sequence>
<reference key="1">
    <citation type="submission" date="2007-03" db="EMBL/GenBank/DDBJ databases">
        <title>Sequencing analysis of Arabis hirsuta chloroplast DNA.</title>
        <authorList>
            <person name="Hosouchi T."/>
            <person name="Tsuruoka H."/>
            <person name="Kotani H."/>
        </authorList>
    </citation>
    <scope>NUCLEOTIDE SEQUENCE [LARGE SCALE GENOMIC DNA]</scope>
</reference>
<feature type="chain" id="PRO_0000339606" description="ATP synthase subunit beta, chloroplastic">
    <location>
        <begin position="1"/>
        <end position="498"/>
    </location>
</feature>
<feature type="binding site" evidence="2">
    <location>
        <begin position="172"/>
        <end position="179"/>
    </location>
    <ligand>
        <name>ATP</name>
        <dbReference type="ChEBI" id="CHEBI:30616"/>
    </ligand>
</feature>
<feature type="modified residue" description="Phosphothreonine" evidence="1">
    <location>
        <position position="6"/>
    </location>
</feature>
<feature type="modified residue" description="Phosphoserine" evidence="1">
    <location>
        <position position="13"/>
    </location>
</feature>
<evidence type="ECO:0000250" key="1">
    <source>
        <dbReference type="UniProtKB" id="P19366"/>
    </source>
</evidence>
<evidence type="ECO:0000255" key="2">
    <source>
        <dbReference type="HAMAP-Rule" id="MF_01347"/>
    </source>
</evidence>
<keyword id="KW-0066">ATP synthesis</keyword>
<keyword id="KW-0067">ATP-binding</keyword>
<keyword id="KW-0139">CF(1)</keyword>
<keyword id="KW-0150">Chloroplast</keyword>
<keyword id="KW-0375">Hydrogen ion transport</keyword>
<keyword id="KW-0406">Ion transport</keyword>
<keyword id="KW-0472">Membrane</keyword>
<keyword id="KW-0547">Nucleotide-binding</keyword>
<keyword id="KW-0597">Phosphoprotein</keyword>
<keyword id="KW-0934">Plastid</keyword>
<keyword id="KW-0793">Thylakoid</keyword>
<keyword id="KW-1278">Translocase</keyword>
<keyword id="KW-0813">Transport</keyword>
<name>ATPB_ARAHI</name>
<accession>A4QK25</accession>